<proteinExistence type="inferred from homology"/>
<comment type="catalytic activity">
    <reaction evidence="1">
        <text>1-(5-phospho-beta-D-ribosyl)-ATP + H2O = 1-(5-phospho-beta-D-ribosyl)-5'-AMP + diphosphate + H(+)</text>
        <dbReference type="Rhea" id="RHEA:22828"/>
        <dbReference type="ChEBI" id="CHEBI:15377"/>
        <dbReference type="ChEBI" id="CHEBI:15378"/>
        <dbReference type="ChEBI" id="CHEBI:33019"/>
        <dbReference type="ChEBI" id="CHEBI:59457"/>
        <dbReference type="ChEBI" id="CHEBI:73183"/>
        <dbReference type="EC" id="3.6.1.31"/>
    </reaction>
</comment>
<comment type="pathway">
    <text evidence="1">Amino-acid biosynthesis; L-histidine biosynthesis; L-histidine from 5-phospho-alpha-D-ribose 1-diphosphate: step 2/9.</text>
</comment>
<comment type="subcellular location">
    <subcellularLocation>
        <location evidence="1">Cytoplasm</location>
    </subcellularLocation>
</comment>
<comment type="similarity">
    <text evidence="1">Belongs to the PRA-PH family.</text>
</comment>
<organism>
    <name type="scientific">Caulobacter sp. (strain K31)</name>
    <dbReference type="NCBI Taxonomy" id="366602"/>
    <lineage>
        <taxon>Bacteria</taxon>
        <taxon>Pseudomonadati</taxon>
        <taxon>Pseudomonadota</taxon>
        <taxon>Alphaproteobacteria</taxon>
        <taxon>Caulobacterales</taxon>
        <taxon>Caulobacteraceae</taxon>
        <taxon>Caulobacter</taxon>
    </lineage>
</organism>
<name>HIS2_CAUSK</name>
<dbReference type="EC" id="3.6.1.31" evidence="1"/>
<dbReference type="EMBL" id="CP000927">
    <property type="protein sequence ID" value="ABZ74161.1"/>
    <property type="molecule type" value="Genomic_DNA"/>
</dbReference>
<dbReference type="SMR" id="B0T797"/>
<dbReference type="STRING" id="366602.Caul_5041"/>
<dbReference type="KEGG" id="cak:Caul_5041"/>
<dbReference type="eggNOG" id="COG0140">
    <property type="taxonomic scope" value="Bacteria"/>
</dbReference>
<dbReference type="HOGENOM" id="CLU_123337_1_1_5"/>
<dbReference type="OrthoDB" id="9814738at2"/>
<dbReference type="UniPathway" id="UPA00031">
    <property type="reaction ID" value="UER00007"/>
</dbReference>
<dbReference type="GO" id="GO:0005737">
    <property type="term" value="C:cytoplasm"/>
    <property type="evidence" value="ECO:0007669"/>
    <property type="project" value="UniProtKB-SubCell"/>
</dbReference>
<dbReference type="GO" id="GO:0005524">
    <property type="term" value="F:ATP binding"/>
    <property type="evidence" value="ECO:0007669"/>
    <property type="project" value="UniProtKB-KW"/>
</dbReference>
<dbReference type="GO" id="GO:0004636">
    <property type="term" value="F:phosphoribosyl-ATP diphosphatase activity"/>
    <property type="evidence" value="ECO:0007669"/>
    <property type="project" value="UniProtKB-UniRule"/>
</dbReference>
<dbReference type="GO" id="GO:0000105">
    <property type="term" value="P:L-histidine biosynthetic process"/>
    <property type="evidence" value="ECO:0007669"/>
    <property type="project" value="UniProtKB-UniRule"/>
</dbReference>
<dbReference type="CDD" id="cd11534">
    <property type="entry name" value="NTP-PPase_HisIE_like"/>
    <property type="match status" value="1"/>
</dbReference>
<dbReference type="Gene3D" id="1.10.287.1080">
    <property type="entry name" value="MazG-like"/>
    <property type="match status" value="1"/>
</dbReference>
<dbReference type="HAMAP" id="MF_01020">
    <property type="entry name" value="HisE"/>
    <property type="match status" value="1"/>
</dbReference>
<dbReference type="InterPro" id="IPR008179">
    <property type="entry name" value="HisE"/>
</dbReference>
<dbReference type="InterPro" id="IPR021130">
    <property type="entry name" value="PRib-ATP_PPHydrolase-like"/>
</dbReference>
<dbReference type="NCBIfam" id="TIGR03188">
    <property type="entry name" value="histidine_hisI"/>
    <property type="match status" value="1"/>
</dbReference>
<dbReference type="NCBIfam" id="NF001611">
    <property type="entry name" value="PRK00400.1-3"/>
    <property type="match status" value="1"/>
</dbReference>
<dbReference type="NCBIfam" id="NF001613">
    <property type="entry name" value="PRK00400.1-5"/>
    <property type="match status" value="1"/>
</dbReference>
<dbReference type="PANTHER" id="PTHR42945">
    <property type="entry name" value="HISTIDINE BIOSYNTHESIS BIFUNCTIONAL PROTEIN"/>
    <property type="match status" value="1"/>
</dbReference>
<dbReference type="PANTHER" id="PTHR42945:SF1">
    <property type="entry name" value="HISTIDINE BIOSYNTHESIS BIFUNCTIONAL PROTEIN HIS7"/>
    <property type="match status" value="1"/>
</dbReference>
<dbReference type="Pfam" id="PF01503">
    <property type="entry name" value="PRA-PH"/>
    <property type="match status" value="1"/>
</dbReference>
<dbReference type="SUPFAM" id="SSF101386">
    <property type="entry name" value="all-alpha NTP pyrophosphatases"/>
    <property type="match status" value="1"/>
</dbReference>
<reference key="1">
    <citation type="submission" date="2008-01" db="EMBL/GenBank/DDBJ databases">
        <title>Complete sequence of chromosome of Caulobacter sp. K31.</title>
        <authorList>
            <consortium name="US DOE Joint Genome Institute"/>
            <person name="Copeland A."/>
            <person name="Lucas S."/>
            <person name="Lapidus A."/>
            <person name="Barry K."/>
            <person name="Glavina del Rio T."/>
            <person name="Dalin E."/>
            <person name="Tice H."/>
            <person name="Pitluck S."/>
            <person name="Bruce D."/>
            <person name="Goodwin L."/>
            <person name="Thompson L.S."/>
            <person name="Brettin T."/>
            <person name="Detter J.C."/>
            <person name="Han C."/>
            <person name="Schmutz J."/>
            <person name="Larimer F."/>
            <person name="Land M."/>
            <person name="Hauser L."/>
            <person name="Kyrpides N."/>
            <person name="Kim E."/>
            <person name="Stephens C."/>
            <person name="Richardson P."/>
        </authorList>
    </citation>
    <scope>NUCLEOTIDE SEQUENCE [LARGE SCALE GENOMIC DNA]</scope>
    <source>
        <strain>K31</strain>
    </source>
</reference>
<keyword id="KW-0028">Amino-acid biosynthesis</keyword>
<keyword id="KW-0067">ATP-binding</keyword>
<keyword id="KW-0963">Cytoplasm</keyword>
<keyword id="KW-0368">Histidine biosynthesis</keyword>
<keyword id="KW-0378">Hydrolase</keyword>
<keyword id="KW-0547">Nucleotide-binding</keyword>
<protein>
    <recommendedName>
        <fullName evidence="1">Phosphoribosyl-ATP pyrophosphatase</fullName>
        <shortName evidence="1">PRA-PH</shortName>
        <ecNumber evidence="1">3.6.1.31</ecNumber>
    </recommendedName>
</protein>
<gene>
    <name evidence="1" type="primary">hisE</name>
    <name type="ordered locus">Caul_5041</name>
</gene>
<evidence type="ECO:0000255" key="1">
    <source>
        <dbReference type="HAMAP-Rule" id="MF_01020"/>
    </source>
</evidence>
<feature type="chain" id="PRO_1000135307" description="Phosphoribosyl-ATP pyrophosphatase">
    <location>
        <begin position="1"/>
        <end position="107"/>
    </location>
</feature>
<sequence length="107" mass="11080">MSKLFEVLERLAATIETRKGGDPTSSYTAKLLNDPALAAKKLGEEAVETVIAAVAQGPDALASESADLLYHWLVLVAASDVSLDAVADKLAAREGTSGLAEKAARPS</sequence>
<accession>B0T797</accession>